<accession>Q1QSZ8</accession>
<dbReference type="EC" id="6.3.2.1" evidence="1"/>
<dbReference type="EMBL" id="CP000285">
    <property type="protein sequence ID" value="ABE60410.1"/>
    <property type="molecule type" value="Genomic_DNA"/>
</dbReference>
<dbReference type="RefSeq" id="WP_011508356.1">
    <property type="nucleotide sequence ID" value="NC_007963.1"/>
</dbReference>
<dbReference type="SMR" id="Q1QSZ8"/>
<dbReference type="STRING" id="290398.Csal_3066"/>
<dbReference type="GeneID" id="95335760"/>
<dbReference type="KEGG" id="csa:Csal_3066"/>
<dbReference type="eggNOG" id="COG0414">
    <property type="taxonomic scope" value="Bacteria"/>
</dbReference>
<dbReference type="HOGENOM" id="CLU_047148_0_0_6"/>
<dbReference type="OrthoDB" id="9773087at2"/>
<dbReference type="UniPathway" id="UPA00028">
    <property type="reaction ID" value="UER00005"/>
</dbReference>
<dbReference type="Proteomes" id="UP000000239">
    <property type="component" value="Chromosome"/>
</dbReference>
<dbReference type="GO" id="GO:0005829">
    <property type="term" value="C:cytosol"/>
    <property type="evidence" value="ECO:0007669"/>
    <property type="project" value="TreeGrafter"/>
</dbReference>
<dbReference type="GO" id="GO:0005524">
    <property type="term" value="F:ATP binding"/>
    <property type="evidence" value="ECO:0007669"/>
    <property type="project" value="UniProtKB-KW"/>
</dbReference>
<dbReference type="GO" id="GO:0004592">
    <property type="term" value="F:pantoate-beta-alanine ligase activity"/>
    <property type="evidence" value="ECO:0007669"/>
    <property type="project" value="UniProtKB-UniRule"/>
</dbReference>
<dbReference type="GO" id="GO:0015940">
    <property type="term" value="P:pantothenate biosynthetic process"/>
    <property type="evidence" value="ECO:0007669"/>
    <property type="project" value="UniProtKB-UniRule"/>
</dbReference>
<dbReference type="CDD" id="cd00560">
    <property type="entry name" value="PanC"/>
    <property type="match status" value="1"/>
</dbReference>
<dbReference type="FunFam" id="3.30.1300.10:FF:000001">
    <property type="entry name" value="Pantothenate synthetase"/>
    <property type="match status" value="1"/>
</dbReference>
<dbReference type="FunFam" id="3.40.50.620:FF:000013">
    <property type="entry name" value="Pantothenate synthetase"/>
    <property type="match status" value="1"/>
</dbReference>
<dbReference type="Gene3D" id="3.40.50.620">
    <property type="entry name" value="HUPs"/>
    <property type="match status" value="1"/>
</dbReference>
<dbReference type="Gene3D" id="3.30.1300.10">
    <property type="entry name" value="Pantoate-beta-alanine ligase, C-terminal domain"/>
    <property type="match status" value="1"/>
</dbReference>
<dbReference type="HAMAP" id="MF_00158">
    <property type="entry name" value="PanC"/>
    <property type="match status" value="1"/>
</dbReference>
<dbReference type="InterPro" id="IPR003721">
    <property type="entry name" value="Pantoate_ligase"/>
</dbReference>
<dbReference type="InterPro" id="IPR042176">
    <property type="entry name" value="Pantoate_ligase_C"/>
</dbReference>
<dbReference type="InterPro" id="IPR014729">
    <property type="entry name" value="Rossmann-like_a/b/a_fold"/>
</dbReference>
<dbReference type="NCBIfam" id="TIGR00018">
    <property type="entry name" value="panC"/>
    <property type="match status" value="1"/>
</dbReference>
<dbReference type="PANTHER" id="PTHR21299">
    <property type="entry name" value="CYTIDYLATE KINASE/PANTOATE-BETA-ALANINE LIGASE"/>
    <property type="match status" value="1"/>
</dbReference>
<dbReference type="PANTHER" id="PTHR21299:SF1">
    <property type="entry name" value="PANTOATE--BETA-ALANINE LIGASE"/>
    <property type="match status" value="1"/>
</dbReference>
<dbReference type="Pfam" id="PF02569">
    <property type="entry name" value="Pantoate_ligase"/>
    <property type="match status" value="1"/>
</dbReference>
<dbReference type="SUPFAM" id="SSF52374">
    <property type="entry name" value="Nucleotidylyl transferase"/>
    <property type="match status" value="1"/>
</dbReference>
<feature type="chain" id="PRO_0000305425" description="Pantothenate synthetase">
    <location>
        <begin position="1"/>
        <end position="283"/>
    </location>
</feature>
<feature type="active site" description="Proton donor" evidence="1">
    <location>
        <position position="37"/>
    </location>
</feature>
<feature type="binding site" evidence="1">
    <location>
        <begin position="30"/>
        <end position="37"/>
    </location>
    <ligand>
        <name>ATP</name>
        <dbReference type="ChEBI" id="CHEBI:30616"/>
    </ligand>
</feature>
<feature type="binding site" evidence="1">
    <location>
        <position position="61"/>
    </location>
    <ligand>
        <name>(R)-pantoate</name>
        <dbReference type="ChEBI" id="CHEBI:15980"/>
    </ligand>
</feature>
<feature type="binding site" evidence="1">
    <location>
        <position position="61"/>
    </location>
    <ligand>
        <name>beta-alanine</name>
        <dbReference type="ChEBI" id="CHEBI:57966"/>
    </ligand>
</feature>
<feature type="binding site" evidence="1">
    <location>
        <begin position="149"/>
        <end position="152"/>
    </location>
    <ligand>
        <name>ATP</name>
        <dbReference type="ChEBI" id="CHEBI:30616"/>
    </ligand>
</feature>
<feature type="binding site" evidence="1">
    <location>
        <position position="155"/>
    </location>
    <ligand>
        <name>(R)-pantoate</name>
        <dbReference type="ChEBI" id="CHEBI:15980"/>
    </ligand>
</feature>
<feature type="binding site" evidence="1">
    <location>
        <begin position="186"/>
        <end position="189"/>
    </location>
    <ligand>
        <name>ATP</name>
        <dbReference type="ChEBI" id="CHEBI:30616"/>
    </ligand>
</feature>
<keyword id="KW-0067">ATP-binding</keyword>
<keyword id="KW-0963">Cytoplasm</keyword>
<keyword id="KW-0436">Ligase</keyword>
<keyword id="KW-0547">Nucleotide-binding</keyword>
<keyword id="KW-0566">Pantothenate biosynthesis</keyword>
<keyword id="KW-1185">Reference proteome</keyword>
<reference key="1">
    <citation type="journal article" date="2011" name="Stand. Genomic Sci.">
        <title>Complete genome sequence of the halophilic and highly halotolerant Chromohalobacter salexigens type strain (1H11(T)).</title>
        <authorList>
            <person name="Copeland A."/>
            <person name="O'Connor K."/>
            <person name="Lucas S."/>
            <person name="Lapidus A."/>
            <person name="Berry K.W."/>
            <person name="Detter J.C."/>
            <person name="Del Rio T.G."/>
            <person name="Hammon N."/>
            <person name="Dalin E."/>
            <person name="Tice H."/>
            <person name="Pitluck S."/>
            <person name="Bruce D."/>
            <person name="Goodwin L."/>
            <person name="Han C."/>
            <person name="Tapia R."/>
            <person name="Saunders E."/>
            <person name="Schmutz J."/>
            <person name="Brettin T."/>
            <person name="Larimer F."/>
            <person name="Land M."/>
            <person name="Hauser L."/>
            <person name="Vargas C."/>
            <person name="Nieto J.J."/>
            <person name="Kyrpides N.C."/>
            <person name="Ivanova N."/>
            <person name="Goker M."/>
            <person name="Klenk H.P."/>
            <person name="Csonka L.N."/>
            <person name="Woyke T."/>
        </authorList>
    </citation>
    <scope>NUCLEOTIDE SEQUENCE [LARGE SCALE GENOMIC DNA]</scope>
    <source>
        <strain>ATCC BAA-138 / DSM 3043 / CIP 106854 / NCIMB 13768 / 1H11</strain>
    </source>
</reference>
<evidence type="ECO:0000255" key="1">
    <source>
        <dbReference type="HAMAP-Rule" id="MF_00158"/>
    </source>
</evidence>
<name>PANC_CHRSD</name>
<proteinExistence type="inferred from homology"/>
<sequence length="283" mass="30602">MLTLSDIGELRNHLHAARRDAKRIALVPTMGNLHAGHLALVDAARRDADVVVATIFVNPLQFGANEDFASYPRTLEADAQALASHGCDLVFTPRTDALYPHGLEAHTQVSVPDVSEGLCGANRPGHFTGVATVVSLLFNLVQPDAAYFGRKDYQQFMVIRKLVADLHFPIEIVGVPTQRAEDGLALSSRNGYLSAAERQRAPALYRTLCQVHDALRAGEAPPTALRDGLAALAEQGFKPDYLELRRAQDLGPIAPDTQEAILLVAAHLGTTRLIDNLAVSLPR</sequence>
<protein>
    <recommendedName>
        <fullName evidence="1">Pantothenate synthetase</fullName>
        <shortName evidence="1">PS</shortName>
        <ecNumber evidence="1">6.3.2.1</ecNumber>
    </recommendedName>
    <alternativeName>
        <fullName evidence="1">Pantoate--beta-alanine ligase</fullName>
    </alternativeName>
    <alternativeName>
        <fullName evidence="1">Pantoate-activating enzyme</fullName>
    </alternativeName>
</protein>
<gene>
    <name evidence="1" type="primary">panC</name>
    <name type="ordered locus">Csal_3066</name>
</gene>
<organism>
    <name type="scientific">Chromohalobacter salexigens (strain ATCC BAA-138 / DSM 3043 / CIP 106854 / NCIMB 13768 / 1H11)</name>
    <dbReference type="NCBI Taxonomy" id="290398"/>
    <lineage>
        <taxon>Bacteria</taxon>
        <taxon>Pseudomonadati</taxon>
        <taxon>Pseudomonadota</taxon>
        <taxon>Gammaproteobacteria</taxon>
        <taxon>Oceanospirillales</taxon>
        <taxon>Halomonadaceae</taxon>
        <taxon>Chromohalobacter</taxon>
    </lineage>
</organism>
<comment type="function">
    <text evidence="1">Catalyzes the condensation of pantoate with beta-alanine in an ATP-dependent reaction via a pantoyl-adenylate intermediate.</text>
</comment>
<comment type="catalytic activity">
    <reaction evidence="1">
        <text>(R)-pantoate + beta-alanine + ATP = (R)-pantothenate + AMP + diphosphate + H(+)</text>
        <dbReference type="Rhea" id="RHEA:10912"/>
        <dbReference type="ChEBI" id="CHEBI:15378"/>
        <dbReference type="ChEBI" id="CHEBI:15980"/>
        <dbReference type="ChEBI" id="CHEBI:29032"/>
        <dbReference type="ChEBI" id="CHEBI:30616"/>
        <dbReference type="ChEBI" id="CHEBI:33019"/>
        <dbReference type="ChEBI" id="CHEBI:57966"/>
        <dbReference type="ChEBI" id="CHEBI:456215"/>
        <dbReference type="EC" id="6.3.2.1"/>
    </reaction>
</comment>
<comment type="pathway">
    <text evidence="1">Cofactor biosynthesis; (R)-pantothenate biosynthesis; (R)-pantothenate from (R)-pantoate and beta-alanine: step 1/1.</text>
</comment>
<comment type="subunit">
    <text evidence="1">Homodimer.</text>
</comment>
<comment type="subcellular location">
    <subcellularLocation>
        <location evidence="1">Cytoplasm</location>
    </subcellularLocation>
</comment>
<comment type="miscellaneous">
    <text evidence="1">The reaction proceeds by a bi uni uni bi ping pong mechanism.</text>
</comment>
<comment type="similarity">
    <text evidence="1">Belongs to the pantothenate synthetase family.</text>
</comment>